<accession>Q4G3B0</accession>
<evidence type="ECO:0000255" key="1">
    <source>
        <dbReference type="HAMAP-Rule" id="MF_00433"/>
    </source>
</evidence>
<feature type="chain" id="PRO_0000233672" description="Cytochrome b6-f complex subunit 6">
    <location>
        <begin position="1"/>
        <end position="31"/>
    </location>
</feature>
<feature type="transmembrane region" description="Helical" evidence="1">
    <location>
        <begin position="3"/>
        <end position="23"/>
    </location>
</feature>
<gene>
    <name evidence="1" type="primary">petL</name>
</gene>
<reference key="1">
    <citation type="journal article" date="2005" name="DNA Res.">
        <title>The complete plastid genome sequence of the haptophyte Emiliania huxleyi: a comparison to other plastid genomes.</title>
        <authorList>
            <person name="Sanchez-Puerta M.V."/>
            <person name="Bachvaroff T.R."/>
            <person name="Delwiche C.F."/>
        </authorList>
    </citation>
    <scope>NUCLEOTIDE SEQUENCE [LARGE SCALE GENOMIC DNA]</scope>
    <source>
        <strain>CCMP373 / CSIRO-CS-57 / BT6</strain>
    </source>
</reference>
<name>PETL_EMIHU</name>
<keyword id="KW-0150">Chloroplast</keyword>
<keyword id="KW-0249">Electron transport</keyword>
<keyword id="KW-0472">Membrane</keyword>
<keyword id="KW-0602">Photosynthesis</keyword>
<keyword id="KW-0934">Plastid</keyword>
<keyword id="KW-0793">Thylakoid</keyword>
<keyword id="KW-0812">Transmembrane</keyword>
<keyword id="KW-1133">Transmembrane helix</keyword>
<keyword id="KW-0813">Transport</keyword>
<protein>
    <recommendedName>
        <fullName evidence="1">Cytochrome b6-f complex subunit 6</fullName>
    </recommendedName>
    <alternativeName>
        <fullName evidence="1">Cytochrome b6-f complex subunit PetL</fullName>
    </alternativeName>
    <alternativeName>
        <fullName evidence="1">Cytochrome b6-f complex subunit VI</fullName>
    </alternativeName>
</protein>
<sequence>MSALIGYILLMTLMFSLAAGLYFGLRSIRLI</sequence>
<geneLocation type="chloroplast"/>
<organism>
    <name type="scientific">Emiliania huxleyi</name>
    <name type="common">Coccolithophore</name>
    <name type="synonym">Pontosphaera huxleyi</name>
    <dbReference type="NCBI Taxonomy" id="2903"/>
    <lineage>
        <taxon>Eukaryota</taxon>
        <taxon>Haptista</taxon>
        <taxon>Haptophyta</taxon>
        <taxon>Prymnesiophyceae</taxon>
        <taxon>Isochrysidales</taxon>
        <taxon>Noelaerhabdaceae</taxon>
        <taxon>Emiliania</taxon>
    </lineage>
</organism>
<proteinExistence type="inferred from homology"/>
<comment type="function">
    <text evidence="1">Component of the cytochrome b6-f complex, which mediates electron transfer between photosystem II (PSII) and photosystem I (PSI), cyclic electron flow around PSI, and state transitions. PetL is important for photoautotrophic growth as well as for electron transfer efficiency and stability of the cytochrome b6-f complex.</text>
</comment>
<comment type="subunit">
    <text evidence="1">The 4 large subunits of the cytochrome b6-f complex are cytochrome b6, subunit IV (17 kDa polypeptide, PetD), cytochrome f and the Rieske protein, while the 4 small subunits are PetG, PetL, PetM and PetN. The complex functions as a dimer.</text>
</comment>
<comment type="subcellular location">
    <subcellularLocation>
        <location evidence="1">Plastid</location>
        <location evidence="1">Chloroplast thylakoid membrane</location>
        <topology evidence="1">Single-pass membrane protein</topology>
    </subcellularLocation>
</comment>
<comment type="similarity">
    <text evidence="1">Belongs to the PetL family.</text>
</comment>
<dbReference type="EMBL" id="AY741371">
    <property type="protein sequence ID" value="AAX13856.1"/>
    <property type="molecule type" value="Genomic_DNA"/>
</dbReference>
<dbReference type="RefSeq" id="YP_277357.1">
    <property type="nucleotide sequence ID" value="NC_007288.1"/>
</dbReference>
<dbReference type="SMR" id="Q4G3B0"/>
<dbReference type="STRING" id="2903.Q4G3B0"/>
<dbReference type="GeneID" id="3562432"/>
<dbReference type="GO" id="GO:0009535">
    <property type="term" value="C:chloroplast thylakoid membrane"/>
    <property type="evidence" value="ECO:0007669"/>
    <property type="project" value="UniProtKB-SubCell"/>
</dbReference>
<dbReference type="GO" id="GO:0009512">
    <property type="term" value="C:cytochrome b6f complex"/>
    <property type="evidence" value="ECO:0007669"/>
    <property type="project" value="InterPro"/>
</dbReference>
<dbReference type="GO" id="GO:0045158">
    <property type="term" value="F:electron transporter, transferring electrons within cytochrome b6/f complex of photosystem II activity"/>
    <property type="evidence" value="ECO:0007669"/>
    <property type="project" value="UniProtKB-UniRule"/>
</dbReference>
<dbReference type="GO" id="GO:0015979">
    <property type="term" value="P:photosynthesis"/>
    <property type="evidence" value="ECO:0007669"/>
    <property type="project" value="UniProtKB-KW"/>
</dbReference>
<dbReference type="HAMAP" id="MF_00433">
    <property type="entry name" value="Cytb6_f_PetL"/>
    <property type="match status" value="1"/>
</dbReference>
<dbReference type="InterPro" id="IPR007802">
    <property type="entry name" value="Cyt_b6/f_cplx_su6"/>
</dbReference>
<dbReference type="Pfam" id="PF05115">
    <property type="entry name" value="PetL"/>
    <property type="match status" value="1"/>
</dbReference>